<organism>
    <name type="scientific">Paracoccus denitrificans (strain Pd 1222)</name>
    <dbReference type="NCBI Taxonomy" id="318586"/>
    <lineage>
        <taxon>Bacteria</taxon>
        <taxon>Pseudomonadati</taxon>
        <taxon>Pseudomonadota</taxon>
        <taxon>Alphaproteobacteria</taxon>
        <taxon>Rhodobacterales</taxon>
        <taxon>Paracoccaceae</taxon>
        <taxon>Paracoccus</taxon>
    </lineage>
</organism>
<comment type="function">
    <text evidence="1">Required for the insertion and/or proper folding and/or complex formation of integral membrane proteins into the membrane. Involved in integration of membrane proteins that insert both dependently and independently of the Sec translocase complex, as well as at least some lipoproteins. Aids folding of multispanning membrane proteins.</text>
</comment>
<comment type="subunit">
    <text evidence="1">Interacts with the Sec translocase complex via SecD. Specifically interacts with transmembrane segments of nascent integral membrane proteins during membrane integration.</text>
</comment>
<comment type="subcellular location">
    <subcellularLocation>
        <location evidence="1">Cell inner membrane</location>
        <topology evidence="1">Multi-pass membrane protein</topology>
    </subcellularLocation>
</comment>
<comment type="similarity">
    <text evidence="1">Belongs to the OXA1/ALB3/YidC family. Type 1 subfamily.</text>
</comment>
<gene>
    <name evidence="1" type="primary">yidC</name>
    <name type="ordered locus">Pden_0877</name>
</gene>
<protein>
    <recommendedName>
        <fullName evidence="1">Membrane protein insertase YidC</fullName>
    </recommendedName>
    <alternativeName>
        <fullName evidence="1">Foldase YidC</fullName>
    </alternativeName>
    <alternativeName>
        <fullName evidence="1">Membrane integrase YidC</fullName>
    </alternativeName>
    <alternativeName>
        <fullName evidence="1">Membrane protein YidC</fullName>
    </alternativeName>
</protein>
<sequence>MQDNNRNLILAMVLSALVMLVWSIFFAPEPVPPAQDTPAASTQGTAQPEAGGPATPGAVPQGAAPELEAAAASSDPSANAGRVAIESSSLAGTISLAGGRIDDLELTGYRETLDTRSPFVRLLSPTAQTTVQAEGSPVAPGGGAELAVQKPYYAVYGWMPAAGTDPALVPGPATVWEVESGAKLGPGQPVTLRWDNGAGQIFRRTYELDDKFLFTVTQTLENTGTAPFSAAPYGILARHGKPDTQNFFVLHEGAVGMTDGKLLEKKYKDMTKLDPLPGEGPAELVEVQENGWIGFTDKYWMTTLAPAPGQSFTAVAKYAPGADIYQTEARMPVQTVAPGATGTSSSYLFAGAKVWEVINGYQTNPGIDRFVDSIDWGWFYFLTKPIFRLLHWLHGMIGNMGWAIIALTFVLKLLVFPLARKSYISMAKMKELQPQMEAIKERTGDDRMKFQKEVMELYKREKVNPAAGCLPVLLQIPIFFALYKVIFVTIELRHAPWIGWIRDLAAPDPSSLWNLFGLLPWAAPGQGSFLHSFTLPVLAILLGVSMWMQQKLNPAPTDPAQKMIFAWMPWVFMFMLGGFASGLVLYWITNNTITIIQQYTIMSMHGHRPDFFGNIRSSLPSRAKAGDKGGDKGGK</sequence>
<proteinExistence type="inferred from homology"/>
<evidence type="ECO:0000255" key="1">
    <source>
        <dbReference type="HAMAP-Rule" id="MF_01810"/>
    </source>
</evidence>
<evidence type="ECO:0000256" key="2">
    <source>
        <dbReference type="SAM" id="MobiDB-lite"/>
    </source>
</evidence>
<reference key="1">
    <citation type="submission" date="2006-12" db="EMBL/GenBank/DDBJ databases">
        <title>Complete sequence of chromosome 1 of Paracoccus denitrificans PD1222.</title>
        <authorList>
            <person name="Copeland A."/>
            <person name="Lucas S."/>
            <person name="Lapidus A."/>
            <person name="Barry K."/>
            <person name="Detter J.C."/>
            <person name="Glavina del Rio T."/>
            <person name="Hammon N."/>
            <person name="Israni S."/>
            <person name="Dalin E."/>
            <person name="Tice H."/>
            <person name="Pitluck S."/>
            <person name="Munk A.C."/>
            <person name="Brettin T."/>
            <person name="Bruce D."/>
            <person name="Han C."/>
            <person name="Tapia R."/>
            <person name="Gilna P."/>
            <person name="Schmutz J."/>
            <person name="Larimer F."/>
            <person name="Land M."/>
            <person name="Hauser L."/>
            <person name="Kyrpides N."/>
            <person name="Lykidis A."/>
            <person name="Spiro S."/>
            <person name="Richardson D.J."/>
            <person name="Moir J.W.B."/>
            <person name="Ferguson S.J."/>
            <person name="van Spanning R.J.M."/>
            <person name="Richardson P."/>
        </authorList>
    </citation>
    <scope>NUCLEOTIDE SEQUENCE [LARGE SCALE GENOMIC DNA]</scope>
    <source>
        <strain>Pd 1222</strain>
    </source>
</reference>
<dbReference type="EMBL" id="CP000489">
    <property type="protein sequence ID" value="ABL68988.1"/>
    <property type="molecule type" value="Genomic_DNA"/>
</dbReference>
<dbReference type="RefSeq" id="WP_011747216.1">
    <property type="nucleotide sequence ID" value="NC_008686.1"/>
</dbReference>
<dbReference type="SMR" id="A1B0E4"/>
<dbReference type="STRING" id="318586.Pden_0877"/>
<dbReference type="EnsemblBacteria" id="ABL68988">
    <property type="protein sequence ID" value="ABL68988"/>
    <property type="gene ID" value="Pden_0877"/>
</dbReference>
<dbReference type="GeneID" id="93452101"/>
<dbReference type="KEGG" id="pde:Pden_0877"/>
<dbReference type="eggNOG" id="COG0706">
    <property type="taxonomic scope" value="Bacteria"/>
</dbReference>
<dbReference type="HOGENOM" id="CLU_016535_1_0_5"/>
<dbReference type="OrthoDB" id="9780552at2"/>
<dbReference type="Proteomes" id="UP000000361">
    <property type="component" value="Chromosome 1"/>
</dbReference>
<dbReference type="GO" id="GO:0005886">
    <property type="term" value="C:plasma membrane"/>
    <property type="evidence" value="ECO:0007669"/>
    <property type="project" value="UniProtKB-SubCell"/>
</dbReference>
<dbReference type="GO" id="GO:0032977">
    <property type="term" value="F:membrane insertase activity"/>
    <property type="evidence" value="ECO:0007669"/>
    <property type="project" value="InterPro"/>
</dbReference>
<dbReference type="GO" id="GO:0051205">
    <property type="term" value="P:protein insertion into membrane"/>
    <property type="evidence" value="ECO:0007669"/>
    <property type="project" value="TreeGrafter"/>
</dbReference>
<dbReference type="GO" id="GO:0015031">
    <property type="term" value="P:protein transport"/>
    <property type="evidence" value="ECO:0007669"/>
    <property type="project" value="UniProtKB-KW"/>
</dbReference>
<dbReference type="CDD" id="cd20070">
    <property type="entry name" value="5TM_YidC_Alb3"/>
    <property type="match status" value="1"/>
</dbReference>
<dbReference type="CDD" id="cd19961">
    <property type="entry name" value="EcYidC-like_peri"/>
    <property type="match status" value="1"/>
</dbReference>
<dbReference type="Gene3D" id="2.70.98.90">
    <property type="match status" value="1"/>
</dbReference>
<dbReference type="HAMAP" id="MF_01810">
    <property type="entry name" value="YidC_type1"/>
    <property type="match status" value="1"/>
</dbReference>
<dbReference type="InterPro" id="IPR019998">
    <property type="entry name" value="Membr_insert_YidC"/>
</dbReference>
<dbReference type="InterPro" id="IPR028053">
    <property type="entry name" value="Membr_insert_YidC_N"/>
</dbReference>
<dbReference type="InterPro" id="IPR001708">
    <property type="entry name" value="YidC/ALB3/OXA1/COX18"/>
</dbReference>
<dbReference type="InterPro" id="IPR028055">
    <property type="entry name" value="YidC/Oxa/ALB_C"/>
</dbReference>
<dbReference type="InterPro" id="IPR047196">
    <property type="entry name" value="YidC_ALB_C"/>
</dbReference>
<dbReference type="InterPro" id="IPR038221">
    <property type="entry name" value="YidC_periplasmic_sf"/>
</dbReference>
<dbReference type="NCBIfam" id="NF002353">
    <property type="entry name" value="PRK01318.1-4"/>
    <property type="match status" value="1"/>
</dbReference>
<dbReference type="NCBIfam" id="TIGR03593">
    <property type="entry name" value="yidC_nterm"/>
    <property type="match status" value="1"/>
</dbReference>
<dbReference type="NCBIfam" id="TIGR03592">
    <property type="entry name" value="yidC_oxa1_cterm"/>
    <property type="match status" value="1"/>
</dbReference>
<dbReference type="PANTHER" id="PTHR12428:SF65">
    <property type="entry name" value="CYTOCHROME C OXIDASE ASSEMBLY PROTEIN COX18, MITOCHONDRIAL"/>
    <property type="match status" value="1"/>
</dbReference>
<dbReference type="PANTHER" id="PTHR12428">
    <property type="entry name" value="OXA1"/>
    <property type="match status" value="1"/>
</dbReference>
<dbReference type="Pfam" id="PF02096">
    <property type="entry name" value="60KD_IMP"/>
    <property type="match status" value="1"/>
</dbReference>
<dbReference type="Pfam" id="PF14849">
    <property type="entry name" value="YidC_periplas"/>
    <property type="match status" value="1"/>
</dbReference>
<dbReference type="PRINTS" id="PR00701">
    <property type="entry name" value="60KDINNERMP"/>
</dbReference>
<dbReference type="PRINTS" id="PR01900">
    <property type="entry name" value="YIDCPROTEIN"/>
</dbReference>
<accession>A1B0E4</accession>
<keyword id="KW-0997">Cell inner membrane</keyword>
<keyword id="KW-1003">Cell membrane</keyword>
<keyword id="KW-0143">Chaperone</keyword>
<keyword id="KW-0472">Membrane</keyword>
<keyword id="KW-0653">Protein transport</keyword>
<keyword id="KW-1185">Reference proteome</keyword>
<keyword id="KW-0812">Transmembrane</keyword>
<keyword id="KW-1133">Transmembrane helix</keyword>
<keyword id="KW-0813">Transport</keyword>
<feature type="chain" id="PRO_1000070131" description="Membrane protein insertase YidC">
    <location>
        <begin position="1"/>
        <end position="635"/>
    </location>
</feature>
<feature type="transmembrane region" description="Helical" evidence="1">
    <location>
        <begin position="8"/>
        <end position="28"/>
    </location>
</feature>
<feature type="transmembrane region" description="Helical" evidence="1">
    <location>
        <begin position="396"/>
        <end position="416"/>
    </location>
</feature>
<feature type="transmembrane region" description="Helical" evidence="1">
    <location>
        <begin position="470"/>
        <end position="490"/>
    </location>
</feature>
<feature type="transmembrane region" description="Helical" evidence="1">
    <location>
        <begin position="528"/>
        <end position="548"/>
    </location>
</feature>
<feature type="transmembrane region" description="Helical" evidence="1">
    <location>
        <begin position="564"/>
        <end position="584"/>
    </location>
</feature>
<feature type="region of interest" description="Disordered" evidence="2">
    <location>
        <begin position="33"/>
        <end position="61"/>
    </location>
</feature>
<feature type="region of interest" description="Disordered" evidence="2">
    <location>
        <begin position="615"/>
        <end position="635"/>
    </location>
</feature>
<feature type="compositionally biased region" description="Basic and acidic residues" evidence="2">
    <location>
        <begin position="624"/>
        <end position="635"/>
    </location>
</feature>
<name>YIDC_PARDP</name>